<proteinExistence type="evidence at protein level"/>
<organism>
    <name type="scientific">Human parainfluenza 2 virus</name>
    <name type="common">HPIV-2</name>
    <dbReference type="NCBI Taxonomy" id="2560525"/>
    <lineage>
        <taxon>Viruses</taxon>
        <taxon>Riboviria</taxon>
        <taxon>Orthornavirae</taxon>
        <taxon>Negarnaviricota</taxon>
        <taxon>Haploviricotina</taxon>
        <taxon>Monjiviricetes</taxon>
        <taxon>Mononegavirales</taxon>
        <taxon>Paramyxoviridae</taxon>
        <taxon>Rubulavirinae</taxon>
        <taxon>Orthorubulavirus</taxon>
        <taxon>Orthorubulavirus laryngotracheitidis</taxon>
    </lineage>
</organism>
<feature type="chain" id="PRO_0000142703" description="Phosphoprotein">
    <location>
        <begin position="1"/>
        <end position="395"/>
    </location>
</feature>
<feature type="region of interest" description="Nuclear localization signal (NLS)" evidence="4">
    <location>
        <begin position="65"/>
        <end position="72"/>
    </location>
</feature>
<feature type="region of interest" description="Disordered" evidence="1">
    <location>
        <begin position="178"/>
        <end position="217"/>
    </location>
</feature>
<feature type="region of interest" description="Nuclear export signal (NES)" evidence="4">
    <location>
        <begin position="225"/>
        <end position="234"/>
    </location>
</feature>
<feature type="compositionally biased region" description="Low complexity" evidence="1">
    <location>
        <begin position="206"/>
        <end position="217"/>
    </location>
</feature>
<keyword id="KW-1035">Host cytoplasm</keyword>
<keyword id="KW-0597">Phosphoprotein</keyword>
<keyword id="KW-0691">RNA editing</keyword>
<keyword id="KW-0693">Viral RNA replication</keyword>
<accession>P23055</accession>
<dbReference type="EMBL" id="M37748">
    <property type="status" value="NOT_ANNOTATED_CDS"/>
    <property type="molecule type" value="Genomic_RNA"/>
</dbReference>
<dbReference type="PIR" id="B35322">
    <property type="entry name" value="RRNZP2"/>
</dbReference>
<dbReference type="SMR" id="P23055"/>
<dbReference type="GO" id="GO:0030430">
    <property type="term" value="C:host cell cytoplasm"/>
    <property type="evidence" value="ECO:0007669"/>
    <property type="project" value="UniProtKB-SubCell"/>
</dbReference>
<dbReference type="Gene3D" id="1.20.5.300">
    <property type="match status" value="1"/>
</dbReference>
<dbReference type="Gene3D" id="1.10.8.10">
    <property type="entry name" value="DNA helicase RuvA subunit, C-terminal domain"/>
    <property type="match status" value="1"/>
</dbReference>
<dbReference type="InterPro" id="IPR004897">
    <property type="entry name" value="P/V_Pprotein_paramyxoviral"/>
</dbReference>
<dbReference type="InterPro" id="IPR025909">
    <property type="entry name" value="Soyouz_module"/>
</dbReference>
<dbReference type="Pfam" id="PF03210">
    <property type="entry name" value="Paramyx_P_V_C"/>
    <property type="match status" value="1"/>
</dbReference>
<dbReference type="Pfam" id="PF14313">
    <property type="entry name" value="Soyouz_module"/>
    <property type="match status" value="1"/>
</dbReference>
<protein>
    <recommendedName>
        <fullName>Phosphoprotein</fullName>
        <shortName>Protein P</shortName>
    </recommendedName>
</protein>
<evidence type="ECO:0000256" key="1">
    <source>
        <dbReference type="SAM" id="MobiDB-lite"/>
    </source>
</evidence>
<evidence type="ECO:0000269" key="2">
    <source>
    </source>
</evidence>
<evidence type="ECO:0000269" key="3">
    <source>
    </source>
</evidence>
<evidence type="ECO:0000269" key="4">
    <source>
    </source>
</evidence>
<evidence type="ECO:0000305" key="5"/>
<sequence>MAEEPTYTTEQVDELIHAGLGTVDFFLSRPIDAQSSLGKGSIPPGVTAVLTSAAEAKSKPVAAGPVKPRRKKVISNTTPYTIADNIPPEKLPINTPIPNPLLPLARPHGKMTDIDIVTGNITEGSYKGVELAKLGKQTLLTRFTSNEPVSSAGSAQDPNFKRGGELIEKEQEATIGENGVLHGSEIRSKSSSGVIPGVPQSRPQLASSPAHADPAPASAENVKEIIELLKGLDLRLQTVEGKVDKILATSATIINLKNEMTSLKASVATVEGMITTIKIMDPSTPTNVPVEEIRKSLHNVPVVIAGPTSGGFTAEGSDMISMDELARPTLSSTKRITRKPESKKDLTGIKLTLMQLANDCISRPDTKTEFVTKIQAATTESQLNEIKRSIIRSAI</sequence>
<comment type="function">
    <text evidence="3 4">Essential component of the RNA polymerase and the nascent chain assembly complex. Also required during RNA synthesis (PubMed:30576860). Also plays a role in viral growth by promoting host RHOA activation and thus actin formation via ARHGAP26 inhibition (PubMed:27512058).</text>
</comment>
<comment type="subunit">
    <text evidence="3 4">Interacts with host ARHGAP26; this interaction promotes host RHOA activation (PubMed:27512058). Interacts with host KPNA1 and KPNA6 (PubMed:30576860).</text>
</comment>
<comment type="subcellular location">
    <subcellularLocation>
        <location evidence="3 4">Host cytoplasm</location>
    </subcellularLocation>
</comment>
<comment type="RNA editing">
    <location>
        <position position="164" evidence="2"/>
    </location>
    <text>Partially edited. RNA editing at this position consists of an insertion of two guanine nucleotides. The sequence displayed here is the P protein, derived from the edited RNA. The unedited RNA version gives rise to the V protein (AC P19847).</text>
</comment>
<comment type="similarity">
    <text evidence="5">Belongs to the rubulavirus/avulavirus P protein family.</text>
</comment>
<organismHost>
    <name type="scientific">Homo sapiens</name>
    <name type="common">Human</name>
    <dbReference type="NCBI Taxonomy" id="9606"/>
</organismHost>
<reference key="1">
    <citation type="journal article" date="1990" name="Virology">
        <title>Two nontemplated nucleotide additions are required to generate the P mRNA of parainfluenza virus type 2 since the RNA genome encodes protein V.</title>
        <authorList>
            <person name="Southern J.A."/>
            <person name="Precious B."/>
            <person name="Randall R.E."/>
        </authorList>
    </citation>
    <scope>NUCLEOTIDE SEQUENCE [GENOMIC RNA]</scope>
    <scope>RNA EDITING</scope>
</reference>
<reference key="2">
    <citation type="journal article" date="2016" name="J. Virol.">
        <title>Graf1 Controls the Growth of Human Parainfluenza Virus Type 2 through Inactivation of RhoA Signaling.</title>
        <authorList>
            <person name="Ohta K."/>
            <person name="Goto H."/>
            <person name="Matsumoto Y."/>
            <person name="Yumine N."/>
            <person name="Tsurudome M."/>
            <person name="Nishio M."/>
        </authorList>
    </citation>
    <scope>FUNCTION</scope>
    <scope>SUBCELLULAR LOCATION</scope>
    <scope>INTERACTION WITH HOST ARHGAP26</scope>
</reference>
<reference key="3">
    <citation type="journal article" date="2019" name="Virology">
        <title>Nucleocytoplasmic shuttling of the human parainfluenza virus type 2 phosphoprotein.</title>
        <authorList>
            <person name="Ohtsuka J."/>
            <person name="Matsumoto Y."/>
            <person name="Ohta K."/>
            <person name="Fukumura M."/>
            <person name="Tsurudome M."/>
            <person name="Nosaka T."/>
            <person name="Nishio M."/>
        </authorList>
    </citation>
    <scope>FUNCTION</scope>
    <scope>SUBCELLULAR LOCATION</scope>
    <scope>INTERACTION WITH HOST KPNA1 AND KPNA6</scope>
</reference>
<gene>
    <name type="primary">P/V</name>
</gene>
<name>PHOSP_PI2H</name>